<gene>
    <name evidence="1" type="primary">mshC</name>
    <name type="ordered locus">SGR_5840</name>
</gene>
<protein>
    <recommendedName>
        <fullName evidence="1">L-cysteine:1D-myo-inositol 2-amino-2-deoxy-alpha-D-glucopyranoside ligase</fullName>
        <shortName evidence="1">L-Cys:GlcN-Ins ligase</shortName>
        <ecNumber evidence="1">6.3.1.13</ecNumber>
    </recommendedName>
    <alternativeName>
        <fullName evidence="1">Mycothiol ligase</fullName>
        <shortName evidence="1">MSH ligase</shortName>
    </alternativeName>
</protein>
<organism>
    <name type="scientific">Streptomyces griseus subsp. griseus (strain JCM 4626 / CBS 651.72 / NBRC 13350 / KCC S-0626 / ISP 5235)</name>
    <dbReference type="NCBI Taxonomy" id="455632"/>
    <lineage>
        <taxon>Bacteria</taxon>
        <taxon>Bacillati</taxon>
        <taxon>Actinomycetota</taxon>
        <taxon>Actinomycetes</taxon>
        <taxon>Kitasatosporales</taxon>
        <taxon>Streptomycetaceae</taxon>
        <taxon>Streptomyces</taxon>
    </lineage>
</organism>
<reference key="1">
    <citation type="journal article" date="2008" name="J. Bacteriol.">
        <title>Genome sequence of the streptomycin-producing microorganism Streptomyces griseus IFO 13350.</title>
        <authorList>
            <person name="Ohnishi Y."/>
            <person name="Ishikawa J."/>
            <person name="Hara H."/>
            <person name="Suzuki H."/>
            <person name="Ikenoya M."/>
            <person name="Ikeda H."/>
            <person name="Yamashita A."/>
            <person name="Hattori M."/>
            <person name="Horinouchi S."/>
        </authorList>
    </citation>
    <scope>NUCLEOTIDE SEQUENCE [LARGE SCALE GENOMIC DNA]</scope>
    <source>
        <strain>JCM 4626 / CBS 651.72 / NBRC 13350 / KCC S-0626 / ISP 5235</strain>
    </source>
</reference>
<comment type="function">
    <text evidence="1">Catalyzes the ATP-dependent condensation of GlcN-Ins and L-cysteine to form L-Cys-GlcN-Ins.</text>
</comment>
<comment type="catalytic activity">
    <reaction evidence="1">
        <text>1D-myo-inositol 2-amino-2-deoxy-alpha-D-glucopyranoside + L-cysteine + ATP = 1D-myo-inositol 2-(L-cysteinylamino)-2-deoxy-alpha-D-glucopyranoside + AMP + diphosphate + H(+)</text>
        <dbReference type="Rhea" id="RHEA:26176"/>
        <dbReference type="ChEBI" id="CHEBI:15378"/>
        <dbReference type="ChEBI" id="CHEBI:30616"/>
        <dbReference type="ChEBI" id="CHEBI:33019"/>
        <dbReference type="ChEBI" id="CHEBI:35235"/>
        <dbReference type="ChEBI" id="CHEBI:58886"/>
        <dbReference type="ChEBI" id="CHEBI:58887"/>
        <dbReference type="ChEBI" id="CHEBI:456215"/>
        <dbReference type="EC" id="6.3.1.13"/>
    </reaction>
</comment>
<comment type="cofactor">
    <cofactor evidence="1">
        <name>Zn(2+)</name>
        <dbReference type="ChEBI" id="CHEBI:29105"/>
    </cofactor>
    <text evidence="1">Binds 1 zinc ion per subunit.</text>
</comment>
<comment type="subunit">
    <text evidence="1">Monomer.</text>
</comment>
<comment type="similarity">
    <text evidence="1">Belongs to the class-I aminoacyl-tRNA synthetase family. MshC subfamily.</text>
</comment>
<evidence type="ECO:0000255" key="1">
    <source>
        <dbReference type="HAMAP-Rule" id="MF_01697"/>
    </source>
</evidence>
<name>MSHC_STRGG</name>
<proteinExistence type="inferred from homology"/>
<accession>B1W2Y7</accession>
<feature type="chain" id="PRO_0000400487" description="L-cysteine:1D-myo-inositol 2-amino-2-deoxy-alpha-D-glucopyranoside ligase">
    <location>
        <begin position="1"/>
        <end position="409"/>
    </location>
</feature>
<feature type="short sequence motif" description="'HIGH' region" evidence="1">
    <location>
        <begin position="45"/>
        <end position="55"/>
    </location>
</feature>
<feature type="short sequence motif" description="'ERGGDP' region" evidence="1">
    <location>
        <begin position="183"/>
        <end position="188"/>
    </location>
</feature>
<feature type="short sequence motif" description="'KMSKS' region" evidence="1">
    <location>
        <begin position="286"/>
        <end position="290"/>
    </location>
</feature>
<feature type="binding site" evidence="1">
    <location>
        <begin position="43"/>
        <end position="46"/>
    </location>
    <ligand>
        <name>L-cysteinyl-5'-AMP</name>
        <dbReference type="ChEBI" id="CHEBI:144924"/>
    </ligand>
</feature>
<feature type="binding site" evidence="1">
    <location>
        <position position="43"/>
    </location>
    <ligand>
        <name>Zn(2+)</name>
        <dbReference type="ChEBI" id="CHEBI:29105"/>
    </ligand>
</feature>
<feature type="binding site" evidence="1">
    <location>
        <position position="58"/>
    </location>
    <ligand>
        <name>L-cysteinyl-5'-AMP</name>
        <dbReference type="ChEBI" id="CHEBI:144924"/>
    </ligand>
</feature>
<feature type="binding site" evidence="1">
    <location>
        <begin position="81"/>
        <end position="83"/>
    </location>
    <ligand>
        <name>L-cysteinyl-5'-AMP</name>
        <dbReference type="ChEBI" id="CHEBI:144924"/>
    </ligand>
</feature>
<feature type="binding site" evidence="1">
    <location>
        <position position="224"/>
    </location>
    <ligand>
        <name>L-cysteinyl-5'-AMP</name>
        <dbReference type="ChEBI" id="CHEBI:144924"/>
    </ligand>
</feature>
<feature type="binding site" evidence="1">
    <location>
        <position position="228"/>
    </location>
    <ligand>
        <name>Zn(2+)</name>
        <dbReference type="ChEBI" id="CHEBI:29105"/>
    </ligand>
</feature>
<feature type="binding site" evidence="1">
    <location>
        <begin position="246"/>
        <end position="248"/>
    </location>
    <ligand>
        <name>L-cysteinyl-5'-AMP</name>
        <dbReference type="ChEBI" id="CHEBI:144924"/>
    </ligand>
</feature>
<feature type="binding site" evidence="1">
    <location>
        <position position="253"/>
    </location>
    <ligand>
        <name>Zn(2+)</name>
        <dbReference type="ChEBI" id="CHEBI:29105"/>
    </ligand>
</feature>
<feature type="binding site" evidence="1">
    <location>
        <position position="280"/>
    </location>
    <ligand>
        <name>L-cysteinyl-5'-AMP</name>
        <dbReference type="ChEBI" id="CHEBI:144924"/>
    </ligand>
</feature>
<dbReference type="EC" id="6.3.1.13" evidence="1"/>
<dbReference type="EMBL" id="AP009493">
    <property type="protein sequence ID" value="BAG22669.1"/>
    <property type="molecule type" value="Genomic_DNA"/>
</dbReference>
<dbReference type="RefSeq" id="WP_012381568.1">
    <property type="nucleotide sequence ID" value="NC_010572.1"/>
</dbReference>
<dbReference type="SMR" id="B1W2Y7"/>
<dbReference type="KEGG" id="sgr:SGR_5840"/>
<dbReference type="PATRIC" id="fig|455632.4.peg.5985"/>
<dbReference type="eggNOG" id="COG0215">
    <property type="taxonomic scope" value="Bacteria"/>
</dbReference>
<dbReference type="HOGENOM" id="CLU_013528_0_0_11"/>
<dbReference type="Proteomes" id="UP000001685">
    <property type="component" value="Chromosome"/>
</dbReference>
<dbReference type="GO" id="GO:0005829">
    <property type="term" value="C:cytosol"/>
    <property type="evidence" value="ECO:0007669"/>
    <property type="project" value="TreeGrafter"/>
</dbReference>
<dbReference type="GO" id="GO:0005524">
    <property type="term" value="F:ATP binding"/>
    <property type="evidence" value="ECO:0007669"/>
    <property type="project" value="UniProtKB-KW"/>
</dbReference>
<dbReference type="GO" id="GO:0035446">
    <property type="term" value="F:cysteine-glucosaminylinositol ligase activity"/>
    <property type="evidence" value="ECO:0007669"/>
    <property type="project" value="UniProtKB-UniRule"/>
</dbReference>
<dbReference type="GO" id="GO:0004817">
    <property type="term" value="F:cysteine-tRNA ligase activity"/>
    <property type="evidence" value="ECO:0007669"/>
    <property type="project" value="TreeGrafter"/>
</dbReference>
<dbReference type="GO" id="GO:0008270">
    <property type="term" value="F:zinc ion binding"/>
    <property type="evidence" value="ECO:0007669"/>
    <property type="project" value="UniProtKB-UniRule"/>
</dbReference>
<dbReference type="GO" id="GO:0006423">
    <property type="term" value="P:cysteinyl-tRNA aminoacylation"/>
    <property type="evidence" value="ECO:0007669"/>
    <property type="project" value="TreeGrafter"/>
</dbReference>
<dbReference type="GO" id="GO:0010125">
    <property type="term" value="P:mycothiol biosynthetic process"/>
    <property type="evidence" value="ECO:0007669"/>
    <property type="project" value="UniProtKB-UniRule"/>
</dbReference>
<dbReference type="CDD" id="cd07955">
    <property type="entry name" value="Anticodon_Ia_Cys_like"/>
    <property type="match status" value="1"/>
</dbReference>
<dbReference type="CDD" id="cd00672">
    <property type="entry name" value="CysRS_core"/>
    <property type="match status" value="1"/>
</dbReference>
<dbReference type="FunFam" id="1.20.120.640:FF:000001">
    <property type="entry name" value="L-cysteine:1D-myo-inositol 2-amino-2-deoxy-alpha-D-glucopyranoside ligase"/>
    <property type="match status" value="1"/>
</dbReference>
<dbReference type="FunFam" id="3.40.50.620:FF:000134">
    <property type="entry name" value="L-cysteine:1D-myo-inositol 2-amino-2-deoxy-alpha-D-glucopyranoside ligase"/>
    <property type="match status" value="1"/>
</dbReference>
<dbReference type="Gene3D" id="1.20.120.640">
    <property type="entry name" value="Anticodon-binding domain of a subclass of class I aminoacyl-tRNA synthetases"/>
    <property type="match status" value="1"/>
</dbReference>
<dbReference type="Gene3D" id="3.40.50.620">
    <property type="entry name" value="HUPs"/>
    <property type="match status" value="1"/>
</dbReference>
<dbReference type="HAMAP" id="MF_01697">
    <property type="entry name" value="MshC"/>
    <property type="match status" value="1"/>
</dbReference>
<dbReference type="InterPro" id="IPR024909">
    <property type="entry name" value="Cys-tRNA/MSH_ligase"/>
</dbReference>
<dbReference type="InterPro" id="IPR017812">
    <property type="entry name" value="Mycothiol_ligase_MshC"/>
</dbReference>
<dbReference type="InterPro" id="IPR014729">
    <property type="entry name" value="Rossmann-like_a/b/a_fold"/>
</dbReference>
<dbReference type="InterPro" id="IPR032678">
    <property type="entry name" value="tRNA-synt_1_cat_dom"/>
</dbReference>
<dbReference type="NCBIfam" id="TIGR03447">
    <property type="entry name" value="mycothiol_MshC"/>
    <property type="match status" value="1"/>
</dbReference>
<dbReference type="PANTHER" id="PTHR10890:SF3">
    <property type="entry name" value="CYSTEINE--TRNA LIGASE, CYTOPLASMIC"/>
    <property type="match status" value="1"/>
</dbReference>
<dbReference type="PANTHER" id="PTHR10890">
    <property type="entry name" value="CYSTEINYL-TRNA SYNTHETASE"/>
    <property type="match status" value="1"/>
</dbReference>
<dbReference type="Pfam" id="PF01406">
    <property type="entry name" value="tRNA-synt_1e"/>
    <property type="match status" value="1"/>
</dbReference>
<dbReference type="PRINTS" id="PR00983">
    <property type="entry name" value="TRNASYNTHCYS"/>
</dbReference>
<dbReference type="SUPFAM" id="SSF52374">
    <property type="entry name" value="Nucleotidylyl transferase"/>
    <property type="match status" value="1"/>
</dbReference>
<keyword id="KW-0067">ATP-binding</keyword>
<keyword id="KW-0436">Ligase</keyword>
<keyword id="KW-0479">Metal-binding</keyword>
<keyword id="KW-0547">Nucleotide-binding</keyword>
<keyword id="KW-0862">Zinc</keyword>
<sequence length="409" mass="44328">MHAWPASEVPALPGKGRDLRIHDTATGGRITLDPGPVARIYVCGITPYDATHMGHAATYNAFDLVQRVWLDTKRQVHYVQNVTDVDDPLLERAVRDGQDWTELAERETALFREDMTALRMLPPRHYIGAVEAIPGIVPLVERLRDAGAAYDLDGDIYFSVDTDPHFGEVSGLDAEAMRLLSAERGGDPERPGKKNPLDPMLWMAARPGEPSWDGASLGEGRPGWHIECVAIALDHLGMGFDIQGGGSDLAFPHHEMGASHAQALTGEHPFAKAYVHAGMVGLDGEKMSKSRGNLVFVSTLRREGVDPAALRLALLSRHYRSDWEWTDQVLAEAVERLARWRAAVSRPDGPSAEALVEEVREALADDLDSPAALAAVDRWAALQSAEGGTDEGAPGVVSRTVDALLGVAL</sequence>